<geneLocation type="chloroplast"/>
<proteinExistence type="inferred from homology"/>
<feature type="chain" id="PRO_0000266596" description="Large ribosomal subunit protein uL14c">
    <location>
        <begin position="1"/>
        <end position="122"/>
    </location>
</feature>
<sequence>MIQPQTYVNVADNSGARKLMCIRVLDASFKQSANIGDTIIAVVKEAIPNMPLKKSDIVRAVIVRSAKGIRRPDGTIIRFDDNAAVVINKEGNPRGTRVFGPVARELREREFTKIVSLAPEVL</sequence>
<accession>Q20F08</accession>
<comment type="function">
    <text evidence="1">Binds to 23S rRNA.</text>
</comment>
<comment type="subunit">
    <text evidence="1">Part of the 50S ribosomal subunit.</text>
</comment>
<comment type="subcellular location">
    <subcellularLocation>
        <location>Plastid</location>
        <location>Chloroplast</location>
    </subcellularLocation>
</comment>
<comment type="similarity">
    <text evidence="1">Belongs to the universal ribosomal protein uL14 family.</text>
</comment>
<gene>
    <name evidence="1" type="primary">rpl14</name>
</gene>
<reference key="1">
    <citation type="journal article" date="2006" name="BMC Biol.">
        <title>The complete chloroplast DNA sequence of the green alga Oltmannsiellopsis viridis reveals a distinctive quadripartite architecture in the chloroplast genome of early diverging ulvophytes.</title>
        <authorList>
            <person name="Pombert J.-F."/>
            <person name="Lemieux C."/>
            <person name="Turmel M."/>
        </authorList>
    </citation>
    <scope>NUCLEOTIDE SEQUENCE [LARGE SCALE GENOMIC DNA]</scope>
</reference>
<keyword id="KW-0150">Chloroplast</keyword>
<keyword id="KW-0934">Plastid</keyword>
<keyword id="KW-0687">Ribonucleoprotein</keyword>
<keyword id="KW-0689">Ribosomal protein</keyword>
<keyword id="KW-0694">RNA-binding</keyword>
<keyword id="KW-0699">rRNA-binding</keyword>
<dbReference type="EMBL" id="DQ291132">
    <property type="protein sequence ID" value="ABB81998.1"/>
    <property type="molecule type" value="Genomic_DNA"/>
</dbReference>
<dbReference type="RefSeq" id="YP_635837.1">
    <property type="nucleotide sequence ID" value="NC_008099.1"/>
</dbReference>
<dbReference type="SMR" id="Q20F08"/>
<dbReference type="GeneID" id="4100174"/>
<dbReference type="GO" id="GO:0009507">
    <property type="term" value="C:chloroplast"/>
    <property type="evidence" value="ECO:0007669"/>
    <property type="project" value="UniProtKB-SubCell"/>
</dbReference>
<dbReference type="GO" id="GO:0022625">
    <property type="term" value="C:cytosolic large ribosomal subunit"/>
    <property type="evidence" value="ECO:0007669"/>
    <property type="project" value="TreeGrafter"/>
</dbReference>
<dbReference type="GO" id="GO:0070180">
    <property type="term" value="F:large ribosomal subunit rRNA binding"/>
    <property type="evidence" value="ECO:0007669"/>
    <property type="project" value="TreeGrafter"/>
</dbReference>
<dbReference type="GO" id="GO:0003735">
    <property type="term" value="F:structural constituent of ribosome"/>
    <property type="evidence" value="ECO:0007669"/>
    <property type="project" value="InterPro"/>
</dbReference>
<dbReference type="GO" id="GO:0006412">
    <property type="term" value="P:translation"/>
    <property type="evidence" value="ECO:0007669"/>
    <property type="project" value="UniProtKB-UniRule"/>
</dbReference>
<dbReference type="CDD" id="cd00337">
    <property type="entry name" value="Ribosomal_uL14"/>
    <property type="match status" value="1"/>
</dbReference>
<dbReference type="FunFam" id="2.40.150.20:FF:000001">
    <property type="entry name" value="50S ribosomal protein L14"/>
    <property type="match status" value="1"/>
</dbReference>
<dbReference type="Gene3D" id="2.40.150.20">
    <property type="entry name" value="Ribosomal protein L14"/>
    <property type="match status" value="1"/>
</dbReference>
<dbReference type="HAMAP" id="MF_01367">
    <property type="entry name" value="Ribosomal_uL14"/>
    <property type="match status" value="1"/>
</dbReference>
<dbReference type="InterPro" id="IPR000218">
    <property type="entry name" value="Ribosomal_uL14"/>
</dbReference>
<dbReference type="InterPro" id="IPR005745">
    <property type="entry name" value="Ribosomal_uL14_bac-type"/>
</dbReference>
<dbReference type="InterPro" id="IPR019972">
    <property type="entry name" value="Ribosomal_uL14_CS"/>
</dbReference>
<dbReference type="InterPro" id="IPR036853">
    <property type="entry name" value="Ribosomal_uL14_sf"/>
</dbReference>
<dbReference type="NCBIfam" id="TIGR01067">
    <property type="entry name" value="rplN_bact"/>
    <property type="match status" value="1"/>
</dbReference>
<dbReference type="PANTHER" id="PTHR11761">
    <property type="entry name" value="50S/60S RIBOSOMAL PROTEIN L14/L23"/>
    <property type="match status" value="1"/>
</dbReference>
<dbReference type="PANTHER" id="PTHR11761:SF3">
    <property type="entry name" value="LARGE RIBOSOMAL SUBUNIT PROTEIN UL14M"/>
    <property type="match status" value="1"/>
</dbReference>
<dbReference type="Pfam" id="PF00238">
    <property type="entry name" value="Ribosomal_L14"/>
    <property type="match status" value="1"/>
</dbReference>
<dbReference type="SMART" id="SM01374">
    <property type="entry name" value="Ribosomal_L14"/>
    <property type="match status" value="1"/>
</dbReference>
<dbReference type="SUPFAM" id="SSF50193">
    <property type="entry name" value="Ribosomal protein L14"/>
    <property type="match status" value="1"/>
</dbReference>
<dbReference type="PROSITE" id="PS00049">
    <property type="entry name" value="RIBOSOMAL_L14"/>
    <property type="match status" value="1"/>
</dbReference>
<name>RK14_OLTVI</name>
<protein>
    <recommendedName>
        <fullName evidence="1">Large ribosomal subunit protein uL14c</fullName>
    </recommendedName>
    <alternativeName>
        <fullName evidence="2">50S ribosomal protein L14, chloroplastic</fullName>
    </alternativeName>
</protein>
<organism>
    <name type="scientific">Oltmannsiellopsis viridis</name>
    <name type="common">Marine flagellate</name>
    <name type="synonym">Oltmannsiella viridis</name>
    <dbReference type="NCBI Taxonomy" id="51324"/>
    <lineage>
        <taxon>Eukaryota</taxon>
        <taxon>Viridiplantae</taxon>
        <taxon>Chlorophyta</taxon>
        <taxon>Ulvophyceae</taxon>
        <taxon>Oltmannsiellopsidales</taxon>
        <taxon>Oltmannsiellopsidaceae</taxon>
        <taxon>Oltmannsiellopsis</taxon>
    </lineage>
</organism>
<evidence type="ECO:0000255" key="1">
    <source>
        <dbReference type="HAMAP-Rule" id="MF_01367"/>
    </source>
</evidence>
<evidence type="ECO:0000305" key="2"/>